<accession>Q9W1J3</accession>
<gene>
    <name type="ORF">CG5543</name>
</gene>
<sequence length="655" mass="73608">MQRGKISFGKIKLNVNVPPAEPRSNETEAEDAKESTEASGNGGGFKKMDKEQMIRQIEDVAEDLESQHLKEVMGISGFGRKAAKVFDINEQIEKARVTRPGMDKKREESKPKEDDQKDEEEEDVIGPLPPAVTTDKEKATKESSKDEDSDDDDYSSDEDSDDEQSLAKRIPYTHEVQMQHGSRAVLALAGDPSGARLVSGSIDYDMCFWDFAGMDSSMRSFRQLQPCENHPIRSLQYSVTGDMILVISGNAQAKVLDRDGFEKLECCKGDQYISDMSRTKGHVAQLTSGCWHPFNREQFLTAALDGTLRIWQGLKSKEQLQVIKTRAQGGLRTNAASCNFNRDATLIAAGCVDGSIQTWDTRKMFVNTTHCVRDAHQKGSEITSIVFSYMGQQLATRSNDETMKLWDLRQFKQPLHTWTNLFSRYDTTDCCFSPDDRLLVTGESLPKGQAEANLYFYSTKSYEEVQRIPVSNAHVVKTLWHPKLNQLFVSCGNGTIKCYYDEHRSIRGAKLCVVKTHRKRQPMEMVGVSQIITPHALPLFRQEKSRTSRKRMEKARMDPVKSQRPDLPITSGQGGRVASSGGTLSSYVIRNLGLSKRVDDDQDPREAILKYAKDAAENPYWIAPAYKQTQPKAIFSEKLPADEPATKKPKTEADK</sequence>
<evidence type="ECO:0000256" key="1">
    <source>
        <dbReference type="SAM" id="MobiDB-lite"/>
    </source>
</evidence>
<evidence type="ECO:0000305" key="2"/>
<protein>
    <recommendedName>
        <fullName>Gastrulation defective protein 1 homolog</fullName>
    </recommendedName>
</protein>
<reference key="1">
    <citation type="journal article" date="2000" name="Science">
        <title>The genome sequence of Drosophila melanogaster.</title>
        <authorList>
            <person name="Adams M.D."/>
            <person name="Celniker S.E."/>
            <person name="Holt R.A."/>
            <person name="Evans C.A."/>
            <person name="Gocayne J.D."/>
            <person name="Amanatides P.G."/>
            <person name="Scherer S.E."/>
            <person name="Li P.W."/>
            <person name="Hoskins R.A."/>
            <person name="Galle R.F."/>
            <person name="George R.A."/>
            <person name="Lewis S.E."/>
            <person name="Richards S."/>
            <person name="Ashburner M."/>
            <person name="Henderson S.N."/>
            <person name="Sutton G.G."/>
            <person name="Wortman J.R."/>
            <person name="Yandell M.D."/>
            <person name="Zhang Q."/>
            <person name="Chen L.X."/>
            <person name="Brandon R.C."/>
            <person name="Rogers Y.-H.C."/>
            <person name="Blazej R.G."/>
            <person name="Champe M."/>
            <person name="Pfeiffer B.D."/>
            <person name="Wan K.H."/>
            <person name="Doyle C."/>
            <person name="Baxter E.G."/>
            <person name="Helt G."/>
            <person name="Nelson C.R."/>
            <person name="Miklos G.L.G."/>
            <person name="Abril J.F."/>
            <person name="Agbayani A."/>
            <person name="An H.-J."/>
            <person name="Andrews-Pfannkoch C."/>
            <person name="Baldwin D."/>
            <person name="Ballew R.M."/>
            <person name="Basu A."/>
            <person name="Baxendale J."/>
            <person name="Bayraktaroglu L."/>
            <person name="Beasley E.M."/>
            <person name="Beeson K.Y."/>
            <person name="Benos P.V."/>
            <person name="Berman B.P."/>
            <person name="Bhandari D."/>
            <person name="Bolshakov S."/>
            <person name="Borkova D."/>
            <person name="Botchan M.R."/>
            <person name="Bouck J."/>
            <person name="Brokstein P."/>
            <person name="Brottier P."/>
            <person name="Burtis K.C."/>
            <person name="Busam D.A."/>
            <person name="Butler H."/>
            <person name="Cadieu E."/>
            <person name="Center A."/>
            <person name="Chandra I."/>
            <person name="Cherry J.M."/>
            <person name="Cawley S."/>
            <person name="Dahlke C."/>
            <person name="Davenport L.B."/>
            <person name="Davies P."/>
            <person name="de Pablos B."/>
            <person name="Delcher A."/>
            <person name="Deng Z."/>
            <person name="Mays A.D."/>
            <person name="Dew I."/>
            <person name="Dietz S.M."/>
            <person name="Dodson K."/>
            <person name="Doup L.E."/>
            <person name="Downes M."/>
            <person name="Dugan-Rocha S."/>
            <person name="Dunkov B.C."/>
            <person name="Dunn P."/>
            <person name="Durbin K.J."/>
            <person name="Evangelista C.C."/>
            <person name="Ferraz C."/>
            <person name="Ferriera S."/>
            <person name="Fleischmann W."/>
            <person name="Fosler C."/>
            <person name="Gabrielian A.E."/>
            <person name="Garg N.S."/>
            <person name="Gelbart W.M."/>
            <person name="Glasser K."/>
            <person name="Glodek A."/>
            <person name="Gong F."/>
            <person name="Gorrell J.H."/>
            <person name="Gu Z."/>
            <person name="Guan P."/>
            <person name="Harris M."/>
            <person name="Harris N.L."/>
            <person name="Harvey D.A."/>
            <person name="Heiman T.J."/>
            <person name="Hernandez J.R."/>
            <person name="Houck J."/>
            <person name="Hostin D."/>
            <person name="Houston K.A."/>
            <person name="Howland T.J."/>
            <person name="Wei M.-H."/>
            <person name="Ibegwam C."/>
            <person name="Jalali M."/>
            <person name="Kalush F."/>
            <person name="Karpen G.H."/>
            <person name="Ke Z."/>
            <person name="Kennison J.A."/>
            <person name="Ketchum K.A."/>
            <person name="Kimmel B.E."/>
            <person name="Kodira C.D."/>
            <person name="Kraft C.L."/>
            <person name="Kravitz S."/>
            <person name="Kulp D."/>
            <person name="Lai Z."/>
            <person name="Lasko P."/>
            <person name="Lei Y."/>
            <person name="Levitsky A.A."/>
            <person name="Li J.H."/>
            <person name="Li Z."/>
            <person name="Liang Y."/>
            <person name="Lin X."/>
            <person name="Liu X."/>
            <person name="Mattei B."/>
            <person name="McIntosh T.C."/>
            <person name="McLeod M.P."/>
            <person name="McPherson D."/>
            <person name="Merkulov G."/>
            <person name="Milshina N.V."/>
            <person name="Mobarry C."/>
            <person name="Morris J."/>
            <person name="Moshrefi A."/>
            <person name="Mount S.M."/>
            <person name="Moy M."/>
            <person name="Murphy B."/>
            <person name="Murphy L."/>
            <person name="Muzny D.M."/>
            <person name="Nelson D.L."/>
            <person name="Nelson D.R."/>
            <person name="Nelson K.A."/>
            <person name="Nixon K."/>
            <person name="Nusskern D.R."/>
            <person name="Pacleb J.M."/>
            <person name="Palazzolo M."/>
            <person name="Pittman G.S."/>
            <person name="Pan S."/>
            <person name="Pollard J."/>
            <person name="Puri V."/>
            <person name="Reese M.G."/>
            <person name="Reinert K."/>
            <person name="Remington K."/>
            <person name="Saunders R.D.C."/>
            <person name="Scheeler F."/>
            <person name="Shen H."/>
            <person name="Shue B.C."/>
            <person name="Siden-Kiamos I."/>
            <person name="Simpson M."/>
            <person name="Skupski M.P."/>
            <person name="Smith T.J."/>
            <person name="Spier E."/>
            <person name="Spradling A.C."/>
            <person name="Stapleton M."/>
            <person name="Strong R."/>
            <person name="Sun E."/>
            <person name="Svirskas R."/>
            <person name="Tector C."/>
            <person name="Turner R."/>
            <person name="Venter E."/>
            <person name="Wang A.H."/>
            <person name="Wang X."/>
            <person name="Wang Z.-Y."/>
            <person name="Wassarman D.A."/>
            <person name="Weinstock G.M."/>
            <person name="Weissenbach J."/>
            <person name="Williams S.M."/>
            <person name="Woodage T."/>
            <person name="Worley K.C."/>
            <person name="Wu D."/>
            <person name="Yang S."/>
            <person name="Yao Q.A."/>
            <person name="Ye J."/>
            <person name="Yeh R.-F."/>
            <person name="Zaveri J.S."/>
            <person name="Zhan M."/>
            <person name="Zhang G."/>
            <person name="Zhao Q."/>
            <person name="Zheng L."/>
            <person name="Zheng X.H."/>
            <person name="Zhong F.N."/>
            <person name="Zhong W."/>
            <person name="Zhou X."/>
            <person name="Zhu S.C."/>
            <person name="Zhu X."/>
            <person name="Smith H.O."/>
            <person name="Gibbs R.A."/>
            <person name="Myers E.W."/>
            <person name="Rubin G.M."/>
            <person name="Venter J.C."/>
        </authorList>
    </citation>
    <scope>NUCLEOTIDE SEQUENCE [LARGE SCALE GENOMIC DNA]</scope>
    <source>
        <strain>Berkeley</strain>
    </source>
</reference>
<reference key="2">
    <citation type="journal article" date="2002" name="Genome Biol.">
        <title>Annotation of the Drosophila melanogaster euchromatic genome: a systematic review.</title>
        <authorList>
            <person name="Misra S."/>
            <person name="Crosby M.A."/>
            <person name="Mungall C.J."/>
            <person name="Matthews B.B."/>
            <person name="Campbell K.S."/>
            <person name="Hradecky P."/>
            <person name="Huang Y."/>
            <person name="Kaminker J.S."/>
            <person name="Millburn G.H."/>
            <person name="Prochnik S.E."/>
            <person name="Smith C.D."/>
            <person name="Tupy J.L."/>
            <person name="Whitfield E.J."/>
            <person name="Bayraktaroglu L."/>
            <person name="Berman B.P."/>
            <person name="Bettencourt B.R."/>
            <person name="Celniker S.E."/>
            <person name="de Grey A.D.N.J."/>
            <person name="Drysdale R.A."/>
            <person name="Harris N.L."/>
            <person name="Richter J."/>
            <person name="Russo S."/>
            <person name="Schroeder A.J."/>
            <person name="Shu S.Q."/>
            <person name="Stapleton M."/>
            <person name="Yamada C."/>
            <person name="Ashburner M."/>
            <person name="Gelbart W.M."/>
            <person name="Rubin G.M."/>
            <person name="Lewis S.E."/>
        </authorList>
    </citation>
    <scope>GENOME REANNOTATION</scope>
    <source>
        <strain>Berkeley</strain>
    </source>
</reference>
<reference key="3">
    <citation type="journal article" date="2002" name="Genome Biol.">
        <title>A Drosophila full-length cDNA resource.</title>
        <authorList>
            <person name="Stapleton M."/>
            <person name="Carlson J.W."/>
            <person name="Brokstein P."/>
            <person name="Yu C."/>
            <person name="Champe M."/>
            <person name="George R.A."/>
            <person name="Guarin H."/>
            <person name="Kronmiller B."/>
            <person name="Pacleb J.M."/>
            <person name="Park S."/>
            <person name="Wan K.H."/>
            <person name="Rubin G.M."/>
            <person name="Celniker S.E."/>
        </authorList>
    </citation>
    <scope>NUCLEOTIDE SEQUENCE [LARGE SCALE MRNA]</scope>
    <source>
        <strain>Berkeley</strain>
        <tissue>Embryo</tissue>
    </source>
</reference>
<organism>
    <name type="scientific">Drosophila melanogaster</name>
    <name type="common">Fruit fly</name>
    <dbReference type="NCBI Taxonomy" id="7227"/>
    <lineage>
        <taxon>Eukaryota</taxon>
        <taxon>Metazoa</taxon>
        <taxon>Ecdysozoa</taxon>
        <taxon>Arthropoda</taxon>
        <taxon>Hexapoda</taxon>
        <taxon>Insecta</taxon>
        <taxon>Pterygota</taxon>
        <taxon>Neoptera</taxon>
        <taxon>Endopterygota</taxon>
        <taxon>Diptera</taxon>
        <taxon>Brachycera</taxon>
        <taxon>Muscomorpha</taxon>
        <taxon>Ephydroidea</taxon>
        <taxon>Drosophilidae</taxon>
        <taxon>Drosophila</taxon>
        <taxon>Sophophora</taxon>
    </lineage>
</organism>
<feature type="chain" id="PRO_0000305142" description="Gastrulation defective protein 1 homolog">
    <location>
        <begin position="1"/>
        <end position="655"/>
    </location>
</feature>
<feature type="repeat" description="WD 1">
    <location>
        <begin position="180"/>
        <end position="219"/>
    </location>
</feature>
<feature type="repeat" description="WD 2">
    <location>
        <begin position="227"/>
        <end position="268"/>
    </location>
</feature>
<feature type="repeat" description="WD 3">
    <location>
        <begin position="281"/>
        <end position="321"/>
    </location>
</feature>
<feature type="repeat" description="WD 4">
    <location>
        <begin position="330"/>
        <end position="369"/>
    </location>
</feature>
<feature type="repeat" description="WD 5">
    <location>
        <begin position="377"/>
        <end position="416"/>
    </location>
</feature>
<feature type="repeat" description="WD 6">
    <location>
        <begin position="422"/>
        <end position="467"/>
    </location>
</feature>
<feature type="repeat" description="WD 7">
    <location>
        <begin position="470"/>
        <end position="510"/>
    </location>
</feature>
<feature type="region of interest" description="Disordered" evidence="1">
    <location>
        <begin position="1"/>
        <end position="54"/>
    </location>
</feature>
<feature type="region of interest" description="Disordered" evidence="1">
    <location>
        <begin position="83"/>
        <end position="165"/>
    </location>
</feature>
<feature type="region of interest" description="Disordered" evidence="1">
    <location>
        <begin position="544"/>
        <end position="580"/>
    </location>
</feature>
<feature type="region of interest" description="Disordered" evidence="1">
    <location>
        <begin position="633"/>
        <end position="655"/>
    </location>
</feature>
<feature type="compositionally biased region" description="Basic and acidic residues" evidence="1">
    <location>
        <begin position="23"/>
        <end position="36"/>
    </location>
</feature>
<feature type="compositionally biased region" description="Basic and acidic residues" evidence="1">
    <location>
        <begin position="91"/>
        <end position="115"/>
    </location>
</feature>
<feature type="compositionally biased region" description="Basic and acidic residues" evidence="1">
    <location>
        <begin position="134"/>
        <end position="146"/>
    </location>
</feature>
<feature type="compositionally biased region" description="Acidic residues" evidence="1">
    <location>
        <begin position="147"/>
        <end position="164"/>
    </location>
</feature>
<feature type="compositionally biased region" description="Basic and acidic residues" evidence="1">
    <location>
        <begin position="554"/>
        <end position="564"/>
    </location>
</feature>
<feature type="compositionally biased region" description="Basic and acidic residues" evidence="1">
    <location>
        <begin position="639"/>
        <end position="655"/>
    </location>
</feature>
<dbReference type="EMBL" id="AE013599">
    <property type="protein sequence ID" value="AAF47065.1"/>
    <property type="molecule type" value="Genomic_DNA"/>
</dbReference>
<dbReference type="EMBL" id="AY058624">
    <property type="protein sequence ID" value="AAL13853.1"/>
    <property type="molecule type" value="mRNA"/>
</dbReference>
<dbReference type="EMBL" id="AY113366">
    <property type="protein sequence ID" value="AAM29371.1"/>
    <property type="molecule type" value="mRNA"/>
</dbReference>
<dbReference type="RefSeq" id="NP_611832.1">
    <property type="nucleotide sequence ID" value="NM_137988.3"/>
</dbReference>
<dbReference type="SMR" id="Q9W1J3"/>
<dbReference type="FunCoup" id="Q9W1J3">
    <property type="interactions" value="2434"/>
</dbReference>
<dbReference type="IntAct" id="Q9W1J3">
    <property type="interactions" value="2"/>
</dbReference>
<dbReference type="STRING" id="7227.FBpp0072033"/>
<dbReference type="PaxDb" id="7227-FBpp0072033"/>
<dbReference type="DNASU" id="37768"/>
<dbReference type="EnsemblMetazoa" id="FBtr0072124">
    <property type="protein sequence ID" value="FBpp0072033"/>
    <property type="gene ID" value="FBgn0034908"/>
</dbReference>
<dbReference type="GeneID" id="37768"/>
<dbReference type="KEGG" id="dme:Dmel_CG5543"/>
<dbReference type="UCSC" id="CG5543-RA">
    <property type="organism name" value="d. melanogaster"/>
</dbReference>
<dbReference type="AGR" id="FB:FBgn0034908"/>
<dbReference type="FlyBase" id="FBgn0034908">
    <property type="gene designation" value="CG5543"/>
</dbReference>
<dbReference type="VEuPathDB" id="VectorBase:FBgn0034908"/>
<dbReference type="eggNOG" id="KOG0772">
    <property type="taxonomic scope" value="Eukaryota"/>
</dbReference>
<dbReference type="GeneTree" id="ENSGT00390000015433"/>
<dbReference type="HOGENOM" id="CLU_014033_1_2_1"/>
<dbReference type="InParanoid" id="Q9W1J3"/>
<dbReference type="OMA" id="KGDQYIT"/>
<dbReference type="OrthoDB" id="10264376at2759"/>
<dbReference type="PhylomeDB" id="Q9W1J3"/>
<dbReference type="Reactome" id="R-DME-72163">
    <property type="pathway name" value="mRNA Splicing - Major Pathway"/>
</dbReference>
<dbReference type="BioGRID-ORCS" id="37768">
    <property type="hits" value="0 hits in 1 CRISPR screen"/>
</dbReference>
<dbReference type="GenomeRNAi" id="37768"/>
<dbReference type="PRO" id="PR:Q9W1J3"/>
<dbReference type="Proteomes" id="UP000000803">
    <property type="component" value="Chromosome 2R"/>
</dbReference>
<dbReference type="Bgee" id="FBgn0034908">
    <property type="expression patterns" value="Expressed in adult tracheocyte (Drosophila) in open tracheal system trachea and 41 other cell types or tissues"/>
</dbReference>
<dbReference type="GO" id="GO:0005634">
    <property type="term" value="C:nucleus"/>
    <property type="evidence" value="ECO:0000318"/>
    <property type="project" value="GO_Central"/>
</dbReference>
<dbReference type="GO" id="GO:0035861">
    <property type="term" value="C:site of double-strand break"/>
    <property type="evidence" value="ECO:0000318"/>
    <property type="project" value="GO_Central"/>
</dbReference>
<dbReference type="FunFam" id="2.130.10.10:FF:001228">
    <property type="entry name" value="Predicted protein"/>
    <property type="match status" value="1"/>
</dbReference>
<dbReference type="FunFam" id="2.130.10.10:FF:001038">
    <property type="entry name" value="WD repeat domain 70"/>
    <property type="match status" value="1"/>
</dbReference>
<dbReference type="Gene3D" id="2.130.10.10">
    <property type="entry name" value="YVTN repeat-like/Quinoprotein amine dehydrogenase"/>
    <property type="match status" value="2"/>
</dbReference>
<dbReference type="InterPro" id="IPR015943">
    <property type="entry name" value="WD40/YVTN_repeat-like_dom_sf"/>
</dbReference>
<dbReference type="InterPro" id="IPR019775">
    <property type="entry name" value="WD40_repeat_CS"/>
</dbReference>
<dbReference type="InterPro" id="IPR036322">
    <property type="entry name" value="WD40_repeat_dom_sf"/>
</dbReference>
<dbReference type="InterPro" id="IPR001680">
    <property type="entry name" value="WD40_rpt"/>
</dbReference>
<dbReference type="InterPro" id="IPR051858">
    <property type="entry name" value="WD_repeat_GAD-1"/>
</dbReference>
<dbReference type="PANTHER" id="PTHR16017">
    <property type="entry name" value="GASTRULATION DEFECTIVE PROTEIN 1-RELATED"/>
    <property type="match status" value="1"/>
</dbReference>
<dbReference type="PANTHER" id="PTHR16017:SF0">
    <property type="entry name" value="WD REPEAT-CONTAINING PROTEIN 70"/>
    <property type="match status" value="1"/>
</dbReference>
<dbReference type="Pfam" id="PF00400">
    <property type="entry name" value="WD40"/>
    <property type="match status" value="4"/>
</dbReference>
<dbReference type="SMART" id="SM00320">
    <property type="entry name" value="WD40"/>
    <property type="match status" value="6"/>
</dbReference>
<dbReference type="SUPFAM" id="SSF50978">
    <property type="entry name" value="WD40 repeat-like"/>
    <property type="match status" value="1"/>
</dbReference>
<dbReference type="PROSITE" id="PS00678">
    <property type="entry name" value="WD_REPEATS_1"/>
    <property type="match status" value="2"/>
</dbReference>
<dbReference type="PROSITE" id="PS50082">
    <property type="entry name" value="WD_REPEATS_2"/>
    <property type="match status" value="2"/>
</dbReference>
<dbReference type="PROSITE" id="PS50294">
    <property type="entry name" value="WD_REPEATS_REGION"/>
    <property type="match status" value="1"/>
</dbReference>
<comment type="similarity">
    <text evidence="2">Belongs to the WD repeat GAD-1 family.</text>
</comment>
<proteinExistence type="evidence at transcript level"/>
<keyword id="KW-1185">Reference proteome</keyword>
<keyword id="KW-0677">Repeat</keyword>
<keyword id="KW-0853">WD repeat</keyword>
<name>GAD1_DROME</name>